<name>T144A_DICDI</name>
<feature type="chain" id="PRO_0000328445" description="Transmembrane protein 144 homolog A">
    <location>
        <begin position="1"/>
        <end position="369"/>
    </location>
</feature>
<feature type="transmembrane region" description="Helical" evidence="1">
    <location>
        <begin position="6"/>
        <end position="26"/>
    </location>
</feature>
<feature type="transmembrane region" description="Helical" evidence="1">
    <location>
        <begin position="35"/>
        <end position="55"/>
    </location>
</feature>
<feature type="transmembrane region" description="Helical" evidence="1">
    <location>
        <begin position="63"/>
        <end position="83"/>
    </location>
</feature>
<feature type="transmembrane region" description="Helical" evidence="1">
    <location>
        <begin position="85"/>
        <end position="105"/>
    </location>
</feature>
<feature type="transmembrane region" description="Helical" evidence="1">
    <location>
        <begin position="122"/>
        <end position="142"/>
    </location>
</feature>
<feature type="transmembrane region" description="Helical" evidence="1">
    <location>
        <begin position="221"/>
        <end position="241"/>
    </location>
</feature>
<feature type="transmembrane region" description="Helical" evidence="1">
    <location>
        <begin position="256"/>
        <end position="276"/>
    </location>
</feature>
<feature type="transmembrane region" description="Helical" evidence="1">
    <location>
        <begin position="288"/>
        <end position="308"/>
    </location>
</feature>
<feature type="transmembrane region" description="Helical" evidence="1">
    <location>
        <begin position="318"/>
        <end position="338"/>
    </location>
</feature>
<feature type="transmembrane region" description="Helical" evidence="1">
    <location>
        <begin position="347"/>
        <end position="367"/>
    </location>
</feature>
<evidence type="ECO:0000255" key="1"/>
<evidence type="ECO:0000305" key="2"/>
<sequence length="369" mass="40639">MVNPMVIGYIGSAAAIIGFGSNYVPVKKYPVGNGLSYAFILSIGGLCVAFIAMMIHGTFVFSPIGILGGSLWAMANLLIIPIIKLVGLGLGVLLWSSIGIVVGFFSGKFGWLGLEKQIVTHDWMNWLGFVGIVISIFCFFFIKPSLEDDNNNKNVVDRFKNKKGGYIDPMDNEEFPILRGSVNSDGPIKFNKYNNNNNNGDELETSTETIFDKIPTKFKKVAGISMSIICGVLLGVNMIPMQLWKQNHQEASPFDIIFSQFAGVFLFNAFTFMFYAMIKKSPQIYPKTVFPSFISGVMWGIANCGLMISTQNLGYTVGYPISCSGPMIISSLWSVFYFHEIKGTKNLLILCGSFLFLISGIILLAFSSF</sequence>
<proteinExistence type="inferred from homology"/>
<keyword id="KW-0472">Membrane</keyword>
<keyword id="KW-1185">Reference proteome</keyword>
<keyword id="KW-0812">Transmembrane</keyword>
<keyword id="KW-1133">Transmembrane helix</keyword>
<organism>
    <name type="scientific">Dictyostelium discoideum</name>
    <name type="common">Social amoeba</name>
    <dbReference type="NCBI Taxonomy" id="44689"/>
    <lineage>
        <taxon>Eukaryota</taxon>
        <taxon>Amoebozoa</taxon>
        <taxon>Evosea</taxon>
        <taxon>Eumycetozoa</taxon>
        <taxon>Dictyostelia</taxon>
        <taxon>Dictyosteliales</taxon>
        <taxon>Dictyosteliaceae</taxon>
        <taxon>Dictyostelium</taxon>
    </lineage>
</organism>
<gene>
    <name type="primary">tmem144A</name>
    <name type="ORF">DDB_G0267928</name>
</gene>
<protein>
    <recommendedName>
        <fullName>Transmembrane protein 144 homolog A</fullName>
    </recommendedName>
    <alternativeName>
        <fullName>Transmembrane protein 144 homolog 1</fullName>
    </alternativeName>
</protein>
<dbReference type="EMBL" id="AAFI02000003">
    <property type="protein sequence ID" value="EAL73417.1"/>
    <property type="molecule type" value="Genomic_DNA"/>
</dbReference>
<dbReference type="FunCoup" id="Q55FV8">
    <property type="interactions" value="1"/>
</dbReference>
<dbReference type="PaxDb" id="44689-DDB0304987"/>
<dbReference type="EnsemblProtists" id="EAL73417">
    <property type="protein sequence ID" value="EAL73417"/>
    <property type="gene ID" value="DDB_G0267928"/>
</dbReference>
<dbReference type="KEGG" id="ddi:DDB_G0267928"/>
<dbReference type="dictyBase" id="DDB_G0267928">
    <property type="gene designation" value="tmem144B"/>
</dbReference>
<dbReference type="VEuPathDB" id="AmoebaDB:DDB_G0267928"/>
<dbReference type="eggNOG" id="ENOG502QR0F">
    <property type="taxonomic scope" value="Eukaryota"/>
</dbReference>
<dbReference type="HOGENOM" id="CLU_031844_1_0_1"/>
<dbReference type="InParanoid" id="Q55FV8"/>
<dbReference type="OMA" id="MFFQWIV"/>
<dbReference type="PhylomeDB" id="Q55FV8"/>
<dbReference type="PRO" id="PR:Q55FV8"/>
<dbReference type="Proteomes" id="UP000002195">
    <property type="component" value="Chromosome 1"/>
</dbReference>
<dbReference type="GO" id="GO:0016020">
    <property type="term" value="C:membrane"/>
    <property type="evidence" value="ECO:0007669"/>
    <property type="project" value="UniProtKB-SubCell"/>
</dbReference>
<dbReference type="GO" id="GO:0015144">
    <property type="term" value="F:carbohydrate transmembrane transporter activity"/>
    <property type="evidence" value="ECO:0007669"/>
    <property type="project" value="InterPro"/>
</dbReference>
<dbReference type="InterPro" id="IPR010651">
    <property type="entry name" value="Sugar_transport"/>
</dbReference>
<dbReference type="InterPro" id="IPR012435">
    <property type="entry name" value="TMEM144"/>
</dbReference>
<dbReference type="PANTHER" id="PTHR16119">
    <property type="entry name" value="TRANSMEMBRANE PROTEIN 144"/>
    <property type="match status" value="1"/>
</dbReference>
<dbReference type="PANTHER" id="PTHR16119:SF17">
    <property type="entry name" value="TRANSMEMBRANE PROTEIN 144"/>
    <property type="match status" value="1"/>
</dbReference>
<dbReference type="Pfam" id="PF07857">
    <property type="entry name" value="TMEM144"/>
    <property type="match status" value="1"/>
</dbReference>
<accession>Q55FV8</accession>
<reference key="1">
    <citation type="journal article" date="2005" name="Nature">
        <title>The genome of the social amoeba Dictyostelium discoideum.</title>
        <authorList>
            <person name="Eichinger L."/>
            <person name="Pachebat J.A."/>
            <person name="Gloeckner G."/>
            <person name="Rajandream M.A."/>
            <person name="Sucgang R."/>
            <person name="Berriman M."/>
            <person name="Song J."/>
            <person name="Olsen R."/>
            <person name="Szafranski K."/>
            <person name="Xu Q."/>
            <person name="Tunggal B."/>
            <person name="Kummerfeld S."/>
            <person name="Madera M."/>
            <person name="Konfortov B.A."/>
            <person name="Rivero F."/>
            <person name="Bankier A.T."/>
            <person name="Lehmann R."/>
            <person name="Hamlin N."/>
            <person name="Davies R."/>
            <person name="Gaudet P."/>
            <person name="Fey P."/>
            <person name="Pilcher K."/>
            <person name="Chen G."/>
            <person name="Saunders D."/>
            <person name="Sodergren E.J."/>
            <person name="Davis P."/>
            <person name="Kerhornou A."/>
            <person name="Nie X."/>
            <person name="Hall N."/>
            <person name="Anjard C."/>
            <person name="Hemphill L."/>
            <person name="Bason N."/>
            <person name="Farbrother P."/>
            <person name="Desany B."/>
            <person name="Just E."/>
            <person name="Morio T."/>
            <person name="Rost R."/>
            <person name="Churcher C.M."/>
            <person name="Cooper J."/>
            <person name="Haydock S."/>
            <person name="van Driessche N."/>
            <person name="Cronin A."/>
            <person name="Goodhead I."/>
            <person name="Muzny D.M."/>
            <person name="Mourier T."/>
            <person name="Pain A."/>
            <person name="Lu M."/>
            <person name="Harper D."/>
            <person name="Lindsay R."/>
            <person name="Hauser H."/>
            <person name="James K.D."/>
            <person name="Quiles M."/>
            <person name="Madan Babu M."/>
            <person name="Saito T."/>
            <person name="Buchrieser C."/>
            <person name="Wardroper A."/>
            <person name="Felder M."/>
            <person name="Thangavelu M."/>
            <person name="Johnson D."/>
            <person name="Knights A."/>
            <person name="Loulseged H."/>
            <person name="Mungall K.L."/>
            <person name="Oliver K."/>
            <person name="Price C."/>
            <person name="Quail M.A."/>
            <person name="Urushihara H."/>
            <person name="Hernandez J."/>
            <person name="Rabbinowitsch E."/>
            <person name="Steffen D."/>
            <person name="Sanders M."/>
            <person name="Ma J."/>
            <person name="Kohara Y."/>
            <person name="Sharp S."/>
            <person name="Simmonds M.N."/>
            <person name="Spiegler S."/>
            <person name="Tivey A."/>
            <person name="Sugano S."/>
            <person name="White B."/>
            <person name="Walker D."/>
            <person name="Woodward J.R."/>
            <person name="Winckler T."/>
            <person name="Tanaka Y."/>
            <person name="Shaulsky G."/>
            <person name="Schleicher M."/>
            <person name="Weinstock G.M."/>
            <person name="Rosenthal A."/>
            <person name="Cox E.C."/>
            <person name="Chisholm R.L."/>
            <person name="Gibbs R.A."/>
            <person name="Loomis W.F."/>
            <person name="Platzer M."/>
            <person name="Kay R.R."/>
            <person name="Williams J.G."/>
            <person name="Dear P.H."/>
            <person name="Noegel A.A."/>
            <person name="Barrell B.G."/>
            <person name="Kuspa A."/>
        </authorList>
    </citation>
    <scope>NUCLEOTIDE SEQUENCE [LARGE SCALE GENOMIC DNA]</scope>
    <source>
        <strain>AX4</strain>
    </source>
</reference>
<comment type="subcellular location">
    <subcellularLocation>
        <location evidence="2">Membrane</location>
        <topology evidence="2">Multi-pass membrane protein</topology>
    </subcellularLocation>
</comment>
<comment type="similarity">
    <text evidence="2">Belongs to the TMEM144 family.</text>
</comment>